<sequence>MMARIFILALLGQLCFLPYLDAITSSPKVQVYSRHPVDSNKENFVNCFVSGFHPPQITIELSKDGEKIPKVEESDLSFSNDWTFNRLVSAPFDPNSRSEYTCKVTHLTLQEPKVVKWDPENN</sequence>
<dbReference type="EMBL" id="AF191646">
    <property type="protein sequence ID" value="AAG28390.1"/>
    <property type="molecule type" value="mRNA"/>
</dbReference>
<dbReference type="SMR" id="Q9GKM2"/>
<dbReference type="GO" id="GO:0005576">
    <property type="term" value="C:extracellular region"/>
    <property type="evidence" value="ECO:0007669"/>
    <property type="project" value="UniProtKB-SubCell"/>
</dbReference>
<dbReference type="GO" id="GO:0042612">
    <property type="term" value="C:MHC class I protein complex"/>
    <property type="evidence" value="ECO:0007669"/>
    <property type="project" value="UniProtKB-KW"/>
</dbReference>
<dbReference type="GO" id="GO:0002474">
    <property type="term" value="P:antigen processing and presentation of peptide antigen via MHC class I"/>
    <property type="evidence" value="ECO:0007669"/>
    <property type="project" value="UniProtKB-KW"/>
</dbReference>
<dbReference type="FunFam" id="2.60.40.10:FF:001005">
    <property type="entry name" value="Beta-2-microglobulin"/>
    <property type="match status" value="1"/>
</dbReference>
<dbReference type="Gene3D" id="2.60.40.10">
    <property type="entry name" value="Immunoglobulins"/>
    <property type="match status" value="1"/>
</dbReference>
<dbReference type="InterPro" id="IPR007110">
    <property type="entry name" value="Ig-like_dom"/>
</dbReference>
<dbReference type="InterPro" id="IPR036179">
    <property type="entry name" value="Ig-like_dom_sf"/>
</dbReference>
<dbReference type="InterPro" id="IPR013783">
    <property type="entry name" value="Ig-like_fold"/>
</dbReference>
<dbReference type="InterPro" id="IPR003006">
    <property type="entry name" value="Ig/MHC_CS"/>
</dbReference>
<dbReference type="InterPro" id="IPR003597">
    <property type="entry name" value="Ig_C1-set"/>
</dbReference>
<dbReference type="InterPro" id="IPR050160">
    <property type="entry name" value="MHC/Immunoglobulin"/>
</dbReference>
<dbReference type="PANTHER" id="PTHR19944:SF62">
    <property type="entry name" value="BETA-2-MICROGLOBULIN"/>
    <property type="match status" value="1"/>
</dbReference>
<dbReference type="PANTHER" id="PTHR19944">
    <property type="entry name" value="MHC CLASS II-RELATED"/>
    <property type="match status" value="1"/>
</dbReference>
<dbReference type="Pfam" id="PF07654">
    <property type="entry name" value="C1-set"/>
    <property type="match status" value="1"/>
</dbReference>
<dbReference type="SMART" id="SM00407">
    <property type="entry name" value="IGc1"/>
    <property type="match status" value="1"/>
</dbReference>
<dbReference type="SUPFAM" id="SSF48726">
    <property type="entry name" value="Immunoglobulin"/>
    <property type="match status" value="1"/>
</dbReference>
<dbReference type="PROSITE" id="PS50835">
    <property type="entry name" value="IG_LIKE"/>
    <property type="match status" value="1"/>
</dbReference>
<dbReference type="PROSITE" id="PS00290">
    <property type="entry name" value="IG_MHC"/>
    <property type="match status" value="1"/>
</dbReference>
<comment type="function">
    <text evidence="1">Component of the class I major histocompatibility complex (MHC). Involved in the presentation of peptide antigens to the immune system (By similarity).</text>
</comment>
<comment type="subunit">
    <text evidence="1">Heterodimer of an alpha chain and a beta chain. Beta-2-microglobulin is the beta-chain of major histocompatibility complex class I molecules (By similarity).</text>
</comment>
<comment type="subcellular location">
    <subcellularLocation>
        <location evidence="1">Secreted</location>
    </subcellularLocation>
</comment>
<comment type="similarity">
    <text evidence="3">Belongs to the beta-2-microglobulin family.</text>
</comment>
<protein>
    <recommendedName>
        <fullName>Beta-2-microglobulin</fullName>
    </recommendedName>
</protein>
<evidence type="ECO:0000250" key="1"/>
<evidence type="ECO:0000255" key="2">
    <source>
        <dbReference type="PROSITE-ProRule" id="PRU00114"/>
    </source>
</evidence>
<evidence type="ECO:0000305" key="3"/>
<organism>
    <name type="scientific">Trichosurus vulpecula</name>
    <name type="common">Brush-tailed possum</name>
    <dbReference type="NCBI Taxonomy" id="9337"/>
    <lineage>
        <taxon>Eukaryota</taxon>
        <taxon>Metazoa</taxon>
        <taxon>Chordata</taxon>
        <taxon>Craniata</taxon>
        <taxon>Vertebrata</taxon>
        <taxon>Euteleostomi</taxon>
        <taxon>Mammalia</taxon>
        <taxon>Metatheria</taxon>
        <taxon>Diprotodontia</taxon>
        <taxon>Phalangeridae</taxon>
        <taxon>Trichosurus</taxon>
    </lineage>
</organism>
<gene>
    <name type="primary">B2M</name>
</gene>
<proteinExistence type="evidence at transcript level"/>
<name>B2MG_TRIVU</name>
<keyword id="KW-1015">Disulfide bond</keyword>
<keyword id="KW-0391">Immunity</keyword>
<keyword id="KW-0393">Immunoglobulin domain</keyword>
<keyword id="KW-0490">MHC I</keyword>
<keyword id="KW-0964">Secreted</keyword>
<keyword id="KW-0732">Signal</keyword>
<feature type="signal peptide" evidence="1">
    <location>
        <begin position="1"/>
        <end position="22"/>
    </location>
</feature>
<feature type="chain" id="PRO_0000018803" description="Beta-2-microglobulin">
    <location>
        <begin position="23"/>
        <end position="122"/>
    </location>
</feature>
<feature type="domain" description="Ig-like C1-type">
    <location>
        <begin position="27"/>
        <end position="115"/>
    </location>
</feature>
<feature type="disulfide bond" evidence="2">
    <location>
        <begin position="47"/>
        <end position="102"/>
    </location>
</feature>
<reference key="1">
    <citation type="submission" date="2001-05" db="EMBL/GenBank/DDBJ databases">
        <title>Patterns of expression and 5' control region sequences of the FcRn receptor (alpha and beta chains) genes of the Australian brushtail possum (Trichosurus vulpecula).</title>
        <authorList>
            <person name="Western A.H."/>
            <person name="Eckery D.C."/>
            <person name="Demmer J."/>
            <person name="Juengel J.L."/>
            <person name="McNatty K.P."/>
            <person name="Fidler A.E."/>
        </authorList>
    </citation>
    <scope>NUCLEOTIDE SEQUENCE [MRNA]</scope>
</reference>
<accession>Q9GKM2</accession>